<evidence type="ECO:0000255" key="1">
    <source>
        <dbReference type="HAMAP-Rule" id="MF_00531"/>
    </source>
</evidence>
<evidence type="ECO:0000305" key="2"/>
<protein>
    <recommendedName>
        <fullName evidence="1">Small ribosomal subunit protein uS19</fullName>
    </recommendedName>
    <alternativeName>
        <fullName evidence="2">30S ribosomal protein S19</fullName>
    </alternativeName>
</protein>
<gene>
    <name evidence="1" type="primary">rpsS</name>
    <name type="ordered locus">PFLU_5523</name>
</gene>
<dbReference type="EMBL" id="AM181176">
    <property type="protein sequence ID" value="CAY52759.1"/>
    <property type="molecule type" value="Genomic_DNA"/>
</dbReference>
<dbReference type="RefSeq" id="WP_003232420.1">
    <property type="nucleotide sequence ID" value="NC_012660.1"/>
</dbReference>
<dbReference type="SMR" id="C3K2X2"/>
<dbReference type="STRING" id="294.SRM1_05175"/>
<dbReference type="GeneID" id="97252158"/>
<dbReference type="eggNOG" id="COG0185">
    <property type="taxonomic scope" value="Bacteria"/>
</dbReference>
<dbReference type="HOGENOM" id="CLU_144911_0_1_6"/>
<dbReference type="OrthoDB" id="9797833at2"/>
<dbReference type="GO" id="GO:0005737">
    <property type="term" value="C:cytoplasm"/>
    <property type="evidence" value="ECO:0007669"/>
    <property type="project" value="UniProtKB-ARBA"/>
</dbReference>
<dbReference type="GO" id="GO:0015935">
    <property type="term" value="C:small ribosomal subunit"/>
    <property type="evidence" value="ECO:0007669"/>
    <property type="project" value="InterPro"/>
</dbReference>
<dbReference type="GO" id="GO:0019843">
    <property type="term" value="F:rRNA binding"/>
    <property type="evidence" value="ECO:0007669"/>
    <property type="project" value="UniProtKB-UniRule"/>
</dbReference>
<dbReference type="GO" id="GO:0003735">
    <property type="term" value="F:structural constituent of ribosome"/>
    <property type="evidence" value="ECO:0007669"/>
    <property type="project" value="InterPro"/>
</dbReference>
<dbReference type="GO" id="GO:0000028">
    <property type="term" value="P:ribosomal small subunit assembly"/>
    <property type="evidence" value="ECO:0007669"/>
    <property type="project" value="TreeGrafter"/>
</dbReference>
<dbReference type="GO" id="GO:0006412">
    <property type="term" value="P:translation"/>
    <property type="evidence" value="ECO:0007669"/>
    <property type="project" value="UniProtKB-UniRule"/>
</dbReference>
<dbReference type="FunFam" id="3.30.860.10:FF:000001">
    <property type="entry name" value="30S ribosomal protein S19"/>
    <property type="match status" value="1"/>
</dbReference>
<dbReference type="Gene3D" id="3.30.860.10">
    <property type="entry name" value="30s Ribosomal Protein S19, Chain A"/>
    <property type="match status" value="1"/>
</dbReference>
<dbReference type="HAMAP" id="MF_00531">
    <property type="entry name" value="Ribosomal_uS19"/>
    <property type="match status" value="1"/>
</dbReference>
<dbReference type="InterPro" id="IPR002222">
    <property type="entry name" value="Ribosomal_uS19"/>
</dbReference>
<dbReference type="InterPro" id="IPR005732">
    <property type="entry name" value="Ribosomal_uS19_bac-type"/>
</dbReference>
<dbReference type="InterPro" id="IPR020934">
    <property type="entry name" value="Ribosomal_uS19_CS"/>
</dbReference>
<dbReference type="InterPro" id="IPR023575">
    <property type="entry name" value="Ribosomal_uS19_SF"/>
</dbReference>
<dbReference type="NCBIfam" id="TIGR01050">
    <property type="entry name" value="rpsS_bact"/>
    <property type="match status" value="1"/>
</dbReference>
<dbReference type="PANTHER" id="PTHR11880">
    <property type="entry name" value="RIBOSOMAL PROTEIN S19P FAMILY MEMBER"/>
    <property type="match status" value="1"/>
</dbReference>
<dbReference type="PANTHER" id="PTHR11880:SF8">
    <property type="entry name" value="SMALL RIBOSOMAL SUBUNIT PROTEIN US19M"/>
    <property type="match status" value="1"/>
</dbReference>
<dbReference type="Pfam" id="PF00203">
    <property type="entry name" value="Ribosomal_S19"/>
    <property type="match status" value="1"/>
</dbReference>
<dbReference type="PIRSF" id="PIRSF002144">
    <property type="entry name" value="Ribosomal_S19"/>
    <property type="match status" value="1"/>
</dbReference>
<dbReference type="PRINTS" id="PR00975">
    <property type="entry name" value="RIBOSOMALS19"/>
</dbReference>
<dbReference type="SUPFAM" id="SSF54570">
    <property type="entry name" value="Ribosomal protein S19"/>
    <property type="match status" value="1"/>
</dbReference>
<dbReference type="PROSITE" id="PS00323">
    <property type="entry name" value="RIBOSOMAL_S19"/>
    <property type="match status" value="1"/>
</dbReference>
<accession>C3K2X2</accession>
<comment type="function">
    <text evidence="1">Protein S19 forms a complex with S13 that binds strongly to the 16S ribosomal RNA.</text>
</comment>
<comment type="similarity">
    <text evidence="1">Belongs to the universal ribosomal protein uS19 family.</text>
</comment>
<sequence length="91" mass="10319">MPRSLKKGPFIDLHLLKKIEVAAEKNDRKPVKTWSRRSMILPQMVGLTIAVHNGRLHVPVLVNEDMVGHKLGEFAGTRTYRGHVADKKAKR</sequence>
<proteinExistence type="inferred from homology"/>
<keyword id="KW-0687">Ribonucleoprotein</keyword>
<keyword id="KW-0689">Ribosomal protein</keyword>
<keyword id="KW-0694">RNA-binding</keyword>
<keyword id="KW-0699">rRNA-binding</keyword>
<feature type="chain" id="PRO_1000211815" description="Small ribosomal subunit protein uS19">
    <location>
        <begin position="1"/>
        <end position="91"/>
    </location>
</feature>
<reference key="1">
    <citation type="journal article" date="2009" name="Genome Biol.">
        <title>Genomic and genetic analyses of diversity and plant interactions of Pseudomonas fluorescens.</title>
        <authorList>
            <person name="Silby M.W."/>
            <person name="Cerdeno-Tarraga A.M."/>
            <person name="Vernikos G.S."/>
            <person name="Giddens S.R."/>
            <person name="Jackson R.W."/>
            <person name="Preston G.M."/>
            <person name="Zhang X.-X."/>
            <person name="Moon C.D."/>
            <person name="Gehrig S.M."/>
            <person name="Godfrey S.A.C."/>
            <person name="Knight C.G."/>
            <person name="Malone J.G."/>
            <person name="Robinson Z."/>
            <person name="Spiers A.J."/>
            <person name="Harris S."/>
            <person name="Challis G.L."/>
            <person name="Yaxley A.M."/>
            <person name="Harris D."/>
            <person name="Seeger K."/>
            <person name="Murphy L."/>
            <person name="Rutter S."/>
            <person name="Squares R."/>
            <person name="Quail M.A."/>
            <person name="Saunders E."/>
            <person name="Mavromatis K."/>
            <person name="Brettin T.S."/>
            <person name="Bentley S.D."/>
            <person name="Hothersall J."/>
            <person name="Stephens E."/>
            <person name="Thomas C.M."/>
            <person name="Parkhill J."/>
            <person name="Levy S.B."/>
            <person name="Rainey P.B."/>
            <person name="Thomson N.R."/>
        </authorList>
    </citation>
    <scope>NUCLEOTIDE SEQUENCE [LARGE SCALE GENOMIC DNA]</scope>
    <source>
        <strain>SBW25</strain>
    </source>
</reference>
<organism>
    <name type="scientific">Pseudomonas fluorescens (strain SBW25)</name>
    <dbReference type="NCBI Taxonomy" id="216595"/>
    <lineage>
        <taxon>Bacteria</taxon>
        <taxon>Pseudomonadati</taxon>
        <taxon>Pseudomonadota</taxon>
        <taxon>Gammaproteobacteria</taxon>
        <taxon>Pseudomonadales</taxon>
        <taxon>Pseudomonadaceae</taxon>
        <taxon>Pseudomonas</taxon>
    </lineage>
</organism>
<name>RS19_PSEFS</name>